<organism>
    <name type="scientific">Methanopyrus kandleri (strain AV19 / DSM 6324 / JCM 9639 / NBRC 100938)</name>
    <dbReference type="NCBI Taxonomy" id="190192"/>
    <lineage>
        <taxon>Archaea</taxon>
        <taxon>Methanobacteriati</taxon>
        <taxon>Methanobacteriota</taxon>
        <taxon>Methanomada group</taxon>
        <taxon>Methanopyri</taxon>
        <taxon>Methanopyrales</taxon>
        <taxon>Methanopyraceae</taxon>
        <taxon>Methanopyrus</taxon>
    </lineage>
</organism>
<keyword id="KW-1003">Cell membrane</keyword>
<keyword id="KW-0472">Membrane</keyword>
<keyword id="KW-0484">Methanogenesis</keyword>
<keyword id="KW-0489">Methyltransferase</keyword>
<keyword id="KW-0554">One-carbon metabolism</keyword>
<keyword id="KW-1185">Reference proteome</keyword>
<keyword id="KW-0808">Transferase</keyword>
<keyword id="KW-1278">Translocase</keyword>
<keyword id="KW-0812">Transmembrane</keyword>
<keyword id="KW-1133">Transmembrane helix</keyword>
<protein>
    <recommendedName>
        <fullName>Tetrahydromethanopterin S-methyltransferase subunit E</fullName>
        <ecNumber>7.2.1.4</ecNumber>
    </recommendedName>
    <alternativeName>
        <fullName>N5-methyltetrahydromethanopterin--coenzyme M methyltransferase subunit E</fullName>
    </alternativeName>
</protein>
<dbReference type="EC" id="7.2.1.4"/>
<dbReference type="EMBL" id="Y14428">
    <property type="protein sequence ID" value="CAA74774.1"/>
    <property type="molecule type" value="Genomic_DNA"/>
</dbReference>
<dbReference type="EMBL" id="AE009439">
    <property type="protein sequence ID" value="AAM01871.1"/>
    <property type="molecule type" value="Genomic_DNA"/>
</dbReference>
<dbReference type="EMBL" id="U57340">
    <property type="protein sequence ID" value="AAB02004.1"/>
    <property type="molecule type" value="Genomic_DNA"/>
</dbReference>
<dbReference type="RefSeq" id="WP_011019026.1">
    <property type="nucleotide sequence ID" value="NC_003551.1"/>
</dbReference>
<dbReference type="SMR" id="Q49606"/>
<dbReference type="FunCoup" id="Q49606">
    <property type="interactions" value="65"/>
</dbReference>
<dbReference type="STRING" id="190192.MK0656"/>
<dbReference type="PaxDb" id="190192-MK0656"/>
<dbReference type="EnsemblBacteria" id="AAM01871">
    <property type="protein sequence ID" value="AAM01871"/>
    <property type="gene ID" value="MK0656"/>
</dbReference>
<dbReference type="GeneID" id="1476757"/>
<dbReference type="KEGG" id="mka:MK0656"/>
<dbReference type="PATRIC" id="fig|190192.8.peg.695"/>
<dbReference type="HOGENOM" id="CLU_958513_0_0_2"/>
<dbReference type="InParanoid" id="Q49606"/>
<dbReference type="OrthoDB" id="82302at2157"/>
<dbReference type="UniPathway" id="UPA00640">
    <property type="reaction ID" value="UER00698"/>
</dbReference>
<dbReference type="Proteomes" id="UP000001826">
    <property type="component" value="Chromosome"/>
</dbReference>
<dbReference type="GO" id="GO:0005737">
    <property type="term" value="C:cytoplasm"/>
    <property type="evidence" value="ECO:0007669"/>
    <property type="project" value="InterPro"/>
</dbReference>
<dbReference type="GO" id="GO:0005886">
    <property type="term" value="C:plasma membrane"/>
    <property type="evidence" value="ECO:0007669"/>
    <property type="project" value="UniProtKB-SubCell"/>
</dbReference>
<dbReference type="GO" id="GO:0012506">
    <property type="term" value="C:vesicle membrane"/>
    <property type="evidence" value="ECO:0007669"/>
    <property type="project" value="InterPro"/>
</dbReference>
<dbReference type="GO" id="GO:0030269">
    <property type="term" value="F:tetrahydromethanopterin S-methyltransferase activity"/>
    <property type="evidence" value="ECO:0007669"/>
    <property type="project" value="UniProtKB-UniRule"/>
</dbReference>
<dbReference type="GO" id="GO:0019386">
    <property type="term" value="P:methanogenesis, from carbon dioxide"/>
    <property type="evidence" value="ECO:0007669"/>
    <property type="project" value="UniProtKB-UniRule"/>
</dbReference>
<dbReference type="GO" id="GO:0032259">
    <property type="term" value="P:methylation"/>
    <property type="evidence" value="ECO:0007669"/>
    <property type="project" value="UniProtKB-KW"/>
</dbReference>
<dbReference type="GO" id="GO:0006730">
    <property type="term" value="P:one-carbon metabolic process"/>
    <property type="evidence" value="ECO:0007669"/>
    <property type="project" value="UniProtKB-UniRule"/>
</dbReference>
<dbReference type="HAMAP" id="MF_01098">
    <property type="entry name" value="MtrE"/>
    <property type="match status" value="1"/>
</dbReference>
<dbReference type="InterPro" id="IPR005780">
    <property type="entry name" value="MeTrfase_E"/>
</dbReference>
<dbReference type="NCBIfam" id="TIGR01113">
    <property type="entry name" value="mtrE"/>
    <property type="match status" value="1"/>
</dbReference>
<dbReference type="Pfam" id="PF04206">
    <property type="entry name" value="MtrE"/>
    <property type="match status" value="1"/>
</dbReference>
<dbReference type="PIRSF" id="PIRSF016509">
    <property type="entry name" value="MtrE"/>
    <property type="match status" value="1"/>
</dbReference>
<gene>
    <name type="primary">mtrE</name>
    <name type="ordered locus">MK0656</name>
</gene>
<sequence>MVGFTEIGLAAAMGALATIAGAFEDAESDVGSQSNPNSQVQLAPQMMNFHRYFNKAISGEPVSYMLYGAIAGTVTWVMMTKFGLPFLAAAAVGVGVNALIHMVFATTAHLGRMASAAEFGHPIYLDVVLSHLGPIAGFGGIATFAIVSLAYIQWALLKHPFPLPLLAALWGVTVGAIGSSTGDVHYGAERLYQHYPFGGGVPVAAHGNITRKAETGIRNSMDSVYFCAKFGNPLTGLCFGLVVFFSTWAGLFGQWGAVIAMGLVTLGCLIVSNRVEKKARESYGTYEDVEMDEICDPV</sequence>
<name>MTRE_METKA</name>
<accession>Q49606</accession>
<proteinExistence type="inferred from homology"/>
<evidence type="ECO:0000250" key="1"/>
<evidence type="ECO:0000255" key="2"/>
<evidence type="ECO:0000305" key="3"/>
<reference key="1">
    <citation type="journal article" date="1997" name="Eur. J. Biochem.">
        <title>Identification of the active site histidine in the corrinoid protein MtrA of the energy-conserving methyltransferase complex from Methanobacterium thermoautotrophicum.</title>
        <authorList>
            <person name="Harms U."/>
            <person name="Thauer R.K."/>
        </authorList>
    </citation>
    <scope>NUCLEOTIDE SEQUENCE [GENOMIC DNA]</scope>
</reference>
<reference key="2">
    <citation type="journal article" date="2002" name="Proc. Natl. Acad. Sci. U.S.A.">
        <title>The complete genome of hyperthermophile Methanopyrus kandleri AV19 and monophyly of archaeal methanogens.</title>
        <authorList>
            <person name="Slesarev A.I."/>
            <person name="Mezhevaya K.V."/>
            <person name="Makarova K.S."/>
            <person name="Polushin N.N."/>
            <person name="Shcherbinina O.V."/>
            <person name="Shakhova V.V."/>
            <person name="Belova G.I."/>
            <person name="Aravind L."/>
            <person name="Natale D.A."/>
            <person name="Rogozin I.B."/>
            <person name="Tatusov R.L."/>
            <person name="Wolf Y.I."/>
            <person name="Stetter K.O."/>
            <person name="Malykh A.G."/>
            <person name="Koonin E.V."/>
            <person name="Kozyavkin S.A."/>
        </authorList>
    </citation>
    <scope>NUCLEOTIDE SEQUENCE [LARGE SCALE GENOMIC DNA]</scope>
    <source>
        <strain>AV19 / DSM 6324 / JCM 9639 / NBRC 100938</strain>
    </source>
</reference>
<reference key="3">
    <citation type="journal article" date="1996" name="Int. J. Syst. Bacteriol.">
        <title>Phylogeny of Methanopyrus kandleri based on methyl coenzyme M reductase operons.</title>
        <authorList>
            <person name="Noelling J."/>
            <person name="Elfner A."/>
            <person name="Palmer J.R."/>
            <person name="Steigerwald V.J."/>
            <person name="Pihl T.D."/>
            <person name="Lake J.A."/>
            <person name="Reeve J.N."/>
        </authorList>
    </citation>
    <scope>NUCLEOTIDE SEQUENCE [GENOMIC DNA] OF 1-89</scope>
</reference>
<feature type="chain" id="PRO_0000147540" description="Tetrahydromethanopterin S-methyltransferase subunit E">
    <location>
        <begin position="1"/>
        <end position="298"/>
    </location>
</feature>
<feature type="transmembrane region" description="Helical" evidence="2">
    <location>
        <begin position="3"/>
        <end position="23"/>
    </location>
</feature>
<feature type="transmembrane region" description="Helical" evidence="2">
    <location>
        <begin position="59"/>
        <end position="79"/>
    </location>
</feature>
<feature type="transmembrane region" description="Helical" evidence="2">
    <location>
        <begin position="84"/>
        <end position="104"/>
    </location>
</feature>
<feature type="transmembrane region" description="Helical" evidence="2">
    <location>
        <begin position="132"/>
        <end position="152"/>
    </location>
</feature>
<feature type="transmembrane region" description="Helical" evidence="2">
    <location>
        <begin position="160"/>
        <end position="180"/>
    </location>
</feature>
<feature type="transmembrane region" description="Helical" evidence="2">
    <location>
        <begin position="230"/>
        <end position="250"/>
    </location>
</feature>
<feature type="transmembrane region" description="Helical" evidence="2">
    <location>
        <begin position="251"/>
        <end position="271"/>
    </location>
</feature>
<comment type="function">
    <text evidence="1">Part of a complex that catalyzes the formation of methyl-coenzyme M and tetrahydromethanopterin from coenzyme M and methyl-tetrahydromethanopterin. This is an energy-conserving, sodium-ion translocating step.</text>
</comment>
<comment type="catalytic activity">
    <reaction>
        <text>5-methyl-5,6,7,8-tetrahydromethanopterin + coenzyme M + 2 Na(+)(in) = 5,6,7,8-tetrahydromethanopterin + methyl-coenzyme M + 2 Na(+)(out)</text>
        <dbReference type="Rhea" id="RHEA:53492"/>
        <dbReference type="ChEBI" id="CHEBI:29101"/>
        <dbReference type="ChEBI" id="CHEBI:58103"/>
        <dbReference type="ChEBI" id="CHEBI:58116"/>
        <dbReference type="ChEBI" id="CHEBI:58286"/>
        <dbReference type="ChEBI" id="CHEBI:58319"/>
        <dbReference type="EC" id="7.2.1.4"/>
    </reaction>
</comment>
<comment type="pathway">
    <text>One-carbon metabolism; methanogenesis from CO(2); methyl-coenzyme M from 5,10-methylene-5,6,7,8-tetrahydromethanopterin: step 2/2.</text>
</comment>
<comment type="subunit">
    <text evidence="1">The complex is composed of 8 subunits; MtrA, MtrB, MtrC, MtrD, MtrE, MtrF, MtrG and MtrH.</text>
</comment>
<comment type="subcellular location">
    <subcellularLocation>
        <location evidence="3">Cell membrane</location>
        <topology evidence="3">Multi-pass membrane protein</topology>
    </subcellularLocation>
</comment>
<comment type="similarity">
    <text evidence="3">Belongs to the MtrE family.</text>
</comment>